<sequence>MQTIAQQITNIIEESLTDMGFELVLVKFKGVSPKVVEVLIDSLNGNKISIEDCTNVSRTISAILDVEDLIEEAYSLEVSSSGIERTLVKFENYNRFLGREVKIKLKELLNGKTLYPR</sequence>
<gene>
    <name evidence="1" type="primary">rimP</name>
    <name type="ordered locus">RP554</name>
</gene>
<keyword id="KW-0963">Cytoplasm</keyword>
<keyword id="KW-1185">Reference proteome</keyword>
<keyword id="KW-0690">Ribosome biogenesis</keyword>
<reference key="1">
    <citation type="journal article" date="1998" name="Nature">
        <title>The genome sequence of Rickettsia prowazekii and the origin of mitochondria.</title>
        <authorList>
            <person name="Andersson S.G.E."/>
            <person name="Zomorodipour A."/>
            <person name="Andersson J.O."/>
            <person name="Sicheritz-Ponten T."/>
            <person name="Alsmark U.C.M."/>
            <person name="Podowski R.M."/>
            <person name="Naeslund A.K."/>
            <person name="Eriksson A.-S."/>
            <person name="Winkler H.H."/>
            <person name="Kurland C.G."/>
        </authorList>
    </citation>
    <scope>NUCLEOTIDE SEQUENCE [LARGE SCALE GENOMIC DNA]</scope>
    <source>
        <strain>Madrid E</strain>
    </source>
</reference>
<accession>Q9ZCZ6</accession>
<evidence type="ECO:0000255" key="1">
    <source>
        <dbReference type="HAMAP-Rule" id="MF_01077"/>
    </source>
</evidence>
<name>RIMP_RICPR</name>
<protein>
    <recommendedName>
        <fullName evidence="1">Ribosome maturation factor RimP</fullName>
    </recommendedName>
</protein>
<dbReference type="EMBL" id="AJ235272">
    <property type="protein sequence ID" value="CAA15003.1"/>
    <property type="molecule type" value="Genomic_DNA"/>
</dbReference>
<dbReference type="PIR" id="A71660">
    <property type="entry name" value="A71660"/>
</dbReference>
<dbReference type="RefSeq" id="NP_220926.1">
    <property type="nucleotide sequence ID" value="NC_000963.1"/>
</dbReference>
<dbReference type="SMR" id="Q9ZCZ6"/>
<dbReference type="STRING" id="272947.gene:17555634"/>
<dbReference type="EnsemblBacteria" id="CAA15003">
    <property type="protein sequence ID" value="CAA15003"/>
    <property type="gene ID" value="CAA15003"/>
</dbReference>
<dbReference type="KEGG" id="rpr:RP554"/>
<dbReference type="PATRIC" id="fig|272947.5.peg.568"/>
<dbReference type="eggNOG" id="COG0779">
    <property type="taxonomic scope" value="Bacteria"/>
</dbReference>
<dbReference type="HOGENOM" id="CLU_070525_0_2_5"/>
<dbReference type="OrthoDB" id="9805006at2"/>
<dbReference type="Proteomes" id="UP000002480">
    <property type="component" value="Chromosome"/>
</dbReference>
<dbReference type="GO" id="GO:0005829">
    <property type="term" value="C:cytosol"/>
    <property type="evidence" value="ECO:0007669"/>
    <property type="project" value="TreeGrafter"/>
</dbReference>
<dbReference type="GO" id="GO:0000028">
    <property type="term" value="P:ribosomal small subunit assembly"/>
    <property type="evidence" value="ECO:0007669"/>
    <property type="project" value="TreeGrafter"/>
</dbReference>
<dbReference type="GO" id="GO:0006412">
    <property type="term" value="P:translation"/>
    <property type="evidence" value="ECO:0007669"/>
    <property type="project" value="TreeGrafter"/>
</dbReference>
<dbReference type="FunFam" id="3.30.300.70:FF:000001">
    <property type="entry name" value="Ribosome maturation factor RimP"/>
    <property type="match status" value="1"/>
</dbReference>
<dbReference type="Gene3D" id="3.30.300.70">
    <property type="entry name" value="RimP-like superfamily, N-terminal"/>
    <property type="match status" value="1"/>
</dbReference>
<dbReference type="HAMAP" id="MF_01077">
    <property type="entry name" value="RimP"/>
    <property type="match status" value="1"/>
</dbReference>
<dbReference type="InterPro" id="IPR003728">
    <property type="entry name" value="Ribosome_maturation_RimP"/>
</dbReference>
<dbReference type="InterPro" id="IPR028989">
    <property type="entry name" value="RimP_N"/>
</dbReference>
<dbReference type="InterPro" id="IPR035956">
    <property type="entry name" value="RimP_N_sf"/>
</dbReference>
<dbReference type="PANTHER" id="PTHR33867">
    <property type="entry name" value="RIBOSOME MATURATION FACTOR RIMP"/>
    <property type="match status" value="1"/>
</dbReference>
<dbReference type="PANTHER" id="PTHR33867:SF1">
    <property type="entry name" value="RIBOSOME MATURATION FACTOR RIMP"/>
    <property type="match status" value="1"/>
</dbReference>
<dbReference type="Pfam" id="PF02576">
    <property type="entry name" value="RimP_N"/>
    <property type="match status" value="1"/>
</dbReference>
<dbReference type="SUPFAM" id="SSF75420">
    <property type="entry name" value="YhbC-like, N-terminal domain"/>
    <property type="match status" value="1"/>
</dbReference>
<comment type="function">
    <text evidence="1">Required for maturation of 30S ribosomal subunits.</text>
</comment>
<comment type="subcellular location">
    <subcellularLocation>
        <location evidence="1">Cytoplasm</location>
    </subcellularLocation>
</comment>
<comment type="similarity">
    <text evidence="1">Belongs to the RimP family.</text>
</comment>
<organism>
    <name type="scientific">Rickettsia prowazekii (strain Madrid E)</name>
    <dbReference type="NCBI Taxonomy" id="272947"/>
    <lineage>
        <taxon>Bacteria</taxon>
        <taxon>Pseudomonadati</taxon>
        <taxon>Pseudomonadota</taxon>
        <taxon>Alphaproteobacteria</taxon>
        <taxon>Rickettsiales</taxon>
        <taxon>Rickettsiaceae</taxon>
        <taxon>Rickettsieae</taxon>
        <taxon>Rickettsia</taxon>
        <taxon>typhus group</taxon>
    </lineage>
</organism>
<feature type="chain" id="PRO_0000181914" description="Ribosome maturation factor RimP">
    <location>
        <begin position="1"/>
        <end position="117"/>
    </location>
</feature>
<proteinExistence type="inferred from homology"/>